<comment type="function">
    <text evidence="4 5 6">Phosphodiesterase (PDE) that catalyzes the hydrolysis of 3'3'-cyclic GMP-AMP (3'3'-cGAMP), leading to linear 5'-pApG (PubMed:25837739, PubMed:30365951). Counteracts the function of the 3'3'-cGAMP synthase DncV, and is involved in the modulation of intracellular 3'3'-cGAMP levels. Enhances bacterial chemotaxis and inhibits intestinal colonization in vivo. Thus exerts a crucial role in regulating bacterial infectivity through catalyzing 3'3'-cGAMP degradation. Is specific for 3'3'-cGAMP since it cannot degrade other cGAMP linkage isomers (3'2'-, 2'3'-, and 2'2'-cGAMPs) (PubMed:25837739). Is also able to hydrolyze c-di-GMP but not c-di-AMP (PubMed:25343965, PubMed:25837739).</text>
</comment>
<comment type="catalytic activity">
    <reaction evidence="5 6">
        <text>3',3'-cGAMP + H2O = 5'-pApG-3' + H(+)</text>
        <dbReference type="Rhea" id="RHEA:58800"/>
        <dbReference type="ChEBI" id="CHEBI:15377"/>
        <dbReference type="ChEBI" id="CHEBI:15378"/>
        <dbReference type="ChEBI" id="CHEBI:71501"/>
        <dbReference type="ChEBI" id="CHEBI:142752"/>
    </reaction>
    <physiologicalReaction direction="left-to-right" evidence="8">
        <dbReference type="Rhea" id="RHEA:58801"/>
    </physiologicalReaction>
</comment>
<comment type="cofactor">
    <cofactor evidence="6">
        <name>Mn(2+)</name>
        <dbReference type="ChEBI" id="CHEBI:29035"/>
    </cofactor>
    <text evidence="6">Requires a divalent metal cation for activity. Likely has a bi-nuclear metal center. Has the highest enzyme activity with Mn(2+).</text>
</comment>
<comment type="biophysicochemical properties">
    <phDependence>
        <text evidence="6">Optimum pH is 9.0-11.0.</text>
    </phDependence>
</comment>
<comment type="subunit">
    <text evidence="6">Homodimer.</text>
</comment>
<comment type="induction">
    <text evidence="4 5">Expression is up-regulated by 3'3'-cGAMP production (at both mRNA and protein levels) (PubMed:25837739). Transcripts are more abundant in biofilm cells than in planktonic cells (PubMed:25343965).</text>
</comment>
<comment type="disruption phenotype">
    <text evidence="5">Significant increase in the ability to colonize the small intestine compared to the wild-type strain. No defect in biofilm formation. Enforced DncV expression in mutant cells lacking this gene causes an enhanced inhibition of chemotaxis. The double mutant lacking both VC_A0681 and VC_A0210 shows enhanced bacterial infectivity, and the triple one (VC_A0681, VC_A0210 and VC_A0931) has the highest infectivity, which demonstrates that V-cGAPs play non-redundant roles in cGAMP degradation.</text>
</comment>
<sequence>MKWFKYGDGMDLFADMRQEAAGEKERVVMHSQEPWCVLLVDDDEQMHQITRLALTGFKFQNRPLELISVLSGLEARKVMAERSDIALALVDVVMETEHAGLDLVRYIREELQNRQVRLVLRTGQAGQAPEDRVIKEYEIDDYKEKTELTTQKLRTLLYSMLRAYRDLCLIEDQKLGLSHVIEASANVQNTKSLQSYATAVLNQLTSLLKLHASAFYCVATPCPDSEKCNALTVATTAERVELYVESPFKGLPEDVQRRCKEVLSQRTTRDYGDAYVFFKQDERGVDSVLYVGFEQELSELDRKLLEIYMYNIGLTFENINLMVDLRETSKELVYNLANAVEARSRETGAHVQRVALYCERLAHLYGLAESEADMIKNASPLHDVGKVAIPDSILHKPGKLDAQEWAIMQKHVEYGVEILNRSKRRLMQVAKEIAATHHEKWDGSGYPNRLQGDDIPISGRITAIADVFDALGAKRSYKDPWTDEQIREELMAQKGRHFEPKLVELLLEHWDEFIAIRASLPD</sequence>
<accession>Q9KMV8</accession>
<keyword id="KW-0378">Hydrolase</keyword>
<keyword id="KW-0464">Manganese</keyword>
<keyword id="KW-0479">Metal-binding</keyword>
<keyword id="KW-0597">Phosphoprotein</keyword>
<keyword id="KW-1185">Reference proteome</keyword>
<feature type="chain" id="PRO_0000435353" description="3'3'-cGAMP-specific phosphodiesterase 2">
    <location>
        <begin position="1"/>
        <end position="522"/>
    </location>
</feature>
<feature type="domain" description="Response regulatory" evidence="2">
    <location>
        <begin position="36"/>
        <end position="160"/>
    </location>
</feature>
<feature type="domain" description="HD-GYP" evidence="3">
    <location>
        <begin position="325"/>
        <end position="522"/>
    </location>
</feature>
<feature type="active site" description="Proton donor" evidence="1">
    <location>
        <position position="386"/>
    </location>
</feature>
<feature type="binding site" evidence="1">
    <location>
        <position position="382"/>
    </location>
    <ligand>
        <name>a divalent metal cation</name>
        <dbReference type="ChEBI" id="CHEBI:60240"/>
        <label>1</label>
    </ligand>
</feature>
<feature type="binding site" evidence="1">
    <location>
        <position position="383"/>
    </location>
    <ligand>
        <name>a divalent metal cation</name>
        <dbReference type="ChEBI" id="CHEBI:60240"/>
        <label>1</label>
    </ligand>
</feature>
<feature type="binding site" evidence="1">
    <location>
        <position position="383"/>
    </location>
    <ligand>
        <name>a divalent metal cation</name>
        <dbReference type="ChEBI" id="CHEBI:60240"/>
        <label>2</label>
    </ligand>
</feature>
<feature type="binding site" evidence="1">
    <location>
        <position position="411"/>
    </location>
    <ligand>
        <name>a divalent metal cation</name>
        <dbReference type="ChEBI" id="CHEBI:60240"/>
        <label>2</label>
    </ligand>
</feature>
<feature type="binding site" evidence="1">
    <location>
        <position position="437"/>
    </location>
    <ligand>
        <name>a divalent metal cation</name>
        <dbReference type="ChEBI" id="CHEBI:60240"/>
        <label>2</label>
    </ligand>
</feature>
<feature type="binding site" evidence="1">
    <location>
        <position position="438"/>
    </location>
    <ligand>
        <name>a divalent metal cation</name>
        <dbReference type="ChEBI" id="CHEBI:60240"/>
        <label>2</label>
    </ligand>
</feature>
<feature type="binding site" evidence="1">
    <location>
        <position position="466"/>
    </location>
    <ligand>
        <name>a divalent metal cation</name>
        <dbReference type="ChEBI" id="CHEBI:60240"/>
        <label>1</label>
    </ligand>
</feature>
<feature type="modified residue" description="4-aspartylphosphate" evidence="2">
    <location>
        <position position="91"/>
    </location>
</feature>
<feature type="mutagenesis site" description="Loss of enzymatic activity." evidence="5">
    <original>HD</original>
    <variation>AA</variation>
    <location>
        <begin position="382"/>
        <end position="383"/>
    </location>
</feature>
<proteinExistence type="evidence at protein level"/>
<name>CGAP2_VIBCH</name>
<reference key="1">
    <citation type="journal article" date="2000" name="Nature">
        <title>DNA sequence of both chromosomes of the cholera pathogen Vibrio cholerae.</title>
        <authorList>
            <person name="Heidelberg J.F."/>
            <person name="Eisen J.A."/>
            <person name="Nelson W.C."/>
            <person name="Clayton R.A."/>
            <person name="Gwinn M.L."/>
            <person name="Dodson R.J."/>
            <person name="Haft D.H."/>
            <person name="Hickey E.K."/>
            <person name="Peterson J.D."/>
            <person name="Umayam L.A."/>
            <person name="Gill S.R."/>
            <person name="Nelson K.E."/>
            <person name="Read T.D."/>
            <person name="Tettelin H."/>
            <person name="Richardson D.L."/>
            <person name="Ermolaeva M.D."/>
            <person name="Vamathevan J.J."/>
            <person name="Bass S."/>
            <person name="Qin H."/>
            <person name="Dragoi I."/>
            <person name="Sellers P."/>
            <person name="McDonald L.A."/>
            <person name="Utterback T.R."/>
            <person name="Fleischmann R.D."/>
            <person name="Nierman W.C."/>
            <person name="White O."/>
            <person name="Salzberg S.L."/>
            <person name="Smith H.O."/>
            <person name="Colwell R.R."/>
            <person name="Mekalanos J.J."/>
            <person name="Venter J.C."/>
            <person name="Fraser C.M."/>
        </authorList>
    </citation>
    <scope>NUCLEOTIDE SEQUENCE [LARGE SCALE GENOMIC DNA]</scope>
    <source>
        <strain>ATCC 39315 / El Tor Inaba N16961</strain>
    </source>
</reference>
<reference key="2">
    <citation type="journal article" date="2014" name="BMC Microbiol.">
        <title>A systematic analysis of the in vitro and in vivo functions of the HD-GYP domain proteins of Vibrio cholerae.</title>
        <authorList>
            <person name="McKee R.W."/>
            <person name="Kariisa A."/>
            <person name="Mudrak B."/>
            <person name="Whitaker C."/>
            <person name="Tamayo R."/>
        </authorList>
    </citation>
    <scope>FUNCTION AS A C-DI-GMP PHOSPHODIESTERASE</scope>
    <scope>INDUCTION</scope>
    <source>
        <strain>El Tor C6706</strain>
    </source>
</reference>
<reference key="3">
    <citation type="journal article" date="2015" name="Cell Res.">
        <title>Identification and characterization of phosphodiesterases that specifically degrade 3'3'-cyclic GMP-AMP.</title>
        <authorList>
            <person name="Gao J."/>
            <person name="Tao J."/>
            <person name="Liang W."/>
            <person name="Zhao M."/>
            <person name="Du X."/>
            <person name="Cui S."/>
            <person name="Duan H."/>
            <person name="Kan B."/>
            <person name="Su X."/>
            <person name="Jiang Z."/>
        </authorList>
    </citation>
    <scope>FUNCTION</scope>
    <scope>CATALYTIC ACTIVITY</scope>
    <scope>SUBSTRATE SPECIFICITY</scope>
    <scope>INDUCTION</scope>
    <scope>DISRUPTION PHENOTYPE</scope>
    <scope>MUTAGENESIS OF 382-HIS-ASP-383</scope>
    <source>
        <strain>ATCC 39315 / El Tor Inaba N16961</strain>
    </source>
</reference>
<reference key="4">
    <citation type="journal article" date="2018" name="J. Mol. Biol.">
        <title>Novel Mechanism for Cyclic Dinucleotide Degradation Revealed by Structural Studies of Vibrio Phosphodiesterase V-cGAP3.</title>
        <authorList>
            <person name="Deng M.J."/>
            <person name="Tao J."/>
            <person name="Chao E."/>
            <person name="Ye Z.Y."/>
            <person name="Jiang Z."/>
            <person name="Yu J."/>
            <person name="Su X.D."/>
        </authorList>
    </citation>
    <scope>FUNCTION</scope>
    <scope>CATALYTIC ACTIVITY</scope>
    <scope>COFACTOR</scope>
    <scope>BIOPHYSICOCHEMICAL PROPERTIES</scope>
    <scope>SUBUNIT</scope>
    <source>
        <strain>ATCC 39315 / El Tor Inaba N16961</strain>
    </source>
</reference>
<dbReference type="EC" id="3.1.4.-" evidence="5 6"/>
<dbReference type="EMBL" id="AE003853">
    <property type="protein sequence ID" value="AAF96122.1"/>
    <property type="molecule type" value="Genomic_DNA"/>
</dbReference>
<dbReference type="PIR" id="H82486">
    <property type="entry name" value="H82486"/>
</dbReference>
<dbReference type="RefSeq" id="NP_232609.1">
    <property type="nucleotide sequence ID" value="NC_002506.1"/>
</dbReference>
<dbReference type="SMR" id="Q9KMV8"/>
<dbReference type="STRING" id="243277.VC_A0210"/>
<dbReference type="DNASU" id="2612328"/>
<dbReference type="EnsemblBacteria" id="AAF96122">
    <property type="protein sequence ID" value="AAF96122"/>
    <property type="gene ID" value="VC_A0210"/>
</dbReference>
<dbReference type="KEGG" id="vch:VC_A0210"/>
<dbReference type="PATRIC" id="fig|243277.26.peg.2844"/>
<dbReference type="eggNOG" id="COG0784">
    <property type="taxonomic scope" value="Bacteria"/>
</dbReference>
<dbReference type="eggNOG" id="COG3437">
    <property type="taxonomic scope" value="Bacteria"/>
</dbReference>
<dbReference type="HOGENOM" id="CLU_000445_92_10_6"/>
<dbReference type="PHI-base" id="PHI:3228"/>
<dbReference type="Proteomes" id="UP000000584">
    <property type="component" value="Chromosome 2"/>
</dbReference>
<dbReference type="GO" id="GO:0004112">
    <property type="term" value="F:cyclic-nucleotide phosphodiesterase activity"/>
    <property type="evidence" value="ECO:0000314"/>
    <property type="project" value="UniProtKB"/>
</dbReference>
<dbReference type="GO" id="GO:0046872">
    <property type="term" value="F:metal ion binding"/>
    <property type="evidence" value="ECO:0007669"/>
    <property type="project" value="UniProtKB-KW"/>
</dbReference>
<dbReference type="GO" id="GO:0009214">
    <property type="term" value="P:cyclic nucleotide catabolic process"/>
    <property type="evidence" value="ECO:0000314"/>
    <property type="project" value="UniProtKB"/>
</dbReference>
<dbReference type="GO" id="GO:0000160">
    <property type="term" value="P:phosphorelay signal transduction system"/>
    <property type="evidence" value="ECO:0007669"/>
    <property type="project" value="InterPro"/>
</dbReference>
<dbReference type="CDD" id="cd00077">
    <property type="entry name" value="HDc"/>
    <property type="match status" value="1"/>
</dbReference>
<dbReference type="FunFam" id="1.10.3210.10:FF:000018">
    <property type="entry name" value="Two-component system response regulator"/>
    <property type="match status" value="1"/>
</dbReference>
<dbReference type="Gene3D" id="3.40.50.2300">
    <property type="match status" value="1"/>
</dbReference>
<dbReference type="Gene3D" id="1.10.3210.10">
    <property type="entry name" value="Hypothetical protein af1432"/>
    <property type="match status" value="1"/>
</dbReference>
<dbReference type="InterPro" id="IPR011006">
    <property type="entry name" value="CheY-like_superfamily"/>
</dbReference>
<dbReference type="InterPro" id="IPR052020">
    <property type="entry name" value="Cyclic_di-GMP/3'3'-cGAMP_PDE"/>
</dbReference>
<dbReference type="InterPro" id="IPR021800">
    <property type="entry name" value="DUF3369"/>
</dbReference>
<dbReference type="InterPro" id="IPR003607">
    <property type="entry name" value="HD/PDEase_dom"/>
</dbReference>
<dbReference type="InterPro" id="IPR037522">
    <property type="entry name" value="HD_GYP_dom"/>
</dbReference>
<dbReference type="InterPro" id="IPR001789">
    <property type="entry name" value="Sig_transdc_resp-reg_receiver"/>
</dbReference>
<dbReference type="PANTHER" id="PTHR45228:SF9">
    <property type="entry name" value="3'3'-CGAMP-SPECIFIC PHOSPHODIESTERASE 2"/>
    <property type="match status" value="1"/>
</dbReference>
<dbReference type="PANTHER" id="PTHR45228">
    <property type="entry name" value="CYCLIC DI-GMP PHOSPHODIESTERASE TM_0186-RELATED"/>
    <property type="match status" value="1"/>
</dbReference>
<dbReference type="Pfam" id="PF11849">
    <property type="entry name" value="DUF3369"/>
    <property type="match status" value="1"/>
</dbReference>
<dbReference type="Pfam" id="PF13487">
    <property type="entry name" value="HD_5"/>
    <property type="match status" value="1"/>
</dbReference>
<dbReference type="SMART" id="SM00471">
    <property type="entry name" value="HDc"/>
    <property type="match status" value="1"/>
</dbReference>
<dbReference type="SUPFAM" id="SSF52172">
    <property type="entry name" value="CheY-like"/>
    <property type="match status" value="1"/>
</dbReference>
<dbReference type="SUPFAM" id="SSF109604">
    <property type="entry name" value="HD-domain/PDEase-like"/>
    <property type="match status" value="1"/>
</dbReference>
<dbReference type="PROSITE" id="PS51832">
    <property type="entry name" value="HD_GYP"/>
    <property type="match status" value="1"/>
</dbReference>
<dbReference type="PROSITE" id="PS50110">
    <property type="entry name" value="RESPONSE_REGULATORY"/>
    <property type="match status" value="1"/>
</dbReference>
<evidence type="ECO:0000250" key="1">
    <source>
        <dbReference type="UniProtKB" id="Q9KL18"/>
    </source>
</evidence>
<evidence type="ECO:0000255" key="2">
    <source>
        <dbReference type="PROSITE-ProRule" id="PRU00169"/>
    </source>
</evidence>
<evidence type="ECO:0000255" key="3">
    <source>
        <dbReference type="PROSITE-ProRule" id="PRU01176"/>
    </source>
</evidence>
<evidence type="ECO:0000269" key="4">
    <source>
    </source>
</evidence>
<evidence type="ECO:0000269" key="5">
    <source>
    </source>
</evidence>
<evidence type="ECO:0000269" key="6">
    <source>
    </source>
</evidence>
<evidence type="ECO:0000303" key="7">
    <source>
    </source>
</evidence>
<evidence type="ECO:0000305" key="8">
    <source>
    </source>
</evidence>
<evidence type="ECO:0000312" key="9">
    <source>
        <dbReference type="EMBL" id="AAF96122.1"/>
    </source>
</evidence>
<organism>
    <name type="scientific">Vibrio cholerae serotype O1 (strain ATCC 39315 / El Tor Inaba N16961)</name>
    <dbReference type="NCBI Taxonomy" id="243277"/>
    <lineage>
        <taxon>Bacteria</taxon>
        <taxon>Pseudomonadati</taxon>
        <taxon>Pseudomonadota</taxon>
        <taxon>Gammaproteobacteria</taxon>
        <taxon>Vibrionales</taxon>
        <taxon>Vibrionaceae</taxon>
        <taxon>Vibrio</taxon>
    </lineage>
</organism>
<gene>
    <name evidence="9" type="ordered locus">VC_A0210</name>
</gene>
<protein>
    <recommendedName>
        <fullName evidence="7">3'3'-cGAMP-specific phosphodiesterase 2</fullName>
        <shortName evidence="7">3'3'-cGAMP PDE 2</shortName>
        <shortName evidence="7">V-cGAP2</shortName>
        <ecNumber evidence="5 6">3.1.4.-</ecNumber>
    </recommendedName>
</protein>